<organism>
    <name type="scientific">Klebsiella pneumoniae (strain 342)</name>
    <dbReference type="NCBI Taxonomy" id="507522"/>
    <lineage>
        <taxon>Bacteria</taxon>
        <taxon>Pseudomonadati</taxon>
        <taxon>Pseudomonadota</taxon>
        <taxon>Gammaproteobacteria</taxon>
        <taxon>Enterobacterales</taxon>
        <taxon>Enterobacteriaceae</taxon>
        <taxon>Klebsiella/Raoultella group</taxon>
        <taxon>Klebsiella</taxon>
        <taxon>Klebsiella pneumoniae complex</taxon>
    </lineage>
</organism>
<keyword id="KW-0687">Ribonucleoprotein</keyword>
<keyword id="KW-0689">Ribosomal protein</keyword>
<keyword id="KW-0694">RNA-binding</keyword>
<keyword id="KW-0699">rRNA-binding</keyword>
<sequence>MARYLGPKLKLSRREGTDLFLKSGVRAIDTKCKIEQAPGQHGARKPRLSDYGVQLREKQKVRRMYGVLERQFRNYYKEAARLKGNTGENLLALLEGRLDNVVYRMGFGATRAEARQLVSHKAIMVNGRVVNIASYQVKANDVVSIREKAKKQSRVKAALELAEQREKPTWLEVDAGKMEGTFKRQPERSDLSADINEHLIVELYSK</sequence>
<reference key="1">
    <citation type="journal article" date="2008" name="PLoS Genet.">
        <title>Complete genome sequence of the N2-fixing broad host range endophyte Klebsiella pneumoniae 342 and virulence predictions verified in mice.</title>
        <authorList>
            <person name="Fouts D.E."/>
            <person name="Tyler H.L."/>
            <person name="DeBoy R.T."/>
            <person name="Daugherty S."/>
            <person name="Ren Q."/>
            <person name="Badger J.H."/>
            <person name="Durkin A.S."/>
            <person name="Huot H."/>
            <person name="Shrivastava S."/>
            <person name="Kothari S."/>
            <person name="Dodson R.J."/>
            <person name="Mohamoud Y."/>
            <person name="Khouri H."/>
            <person name="Roesch L.F.W."/>
            <person name="Krogfelt K.A."/>
            <person name="Struve C."/>
            <person name="Triplett E.W."/>
            <person name="Methe B.A."/>
        </authorList>
    </citation>
    <scope>NUCLEOTIDE SEQUENCE [LARGE SCALE GENOMIC DNA]</scope>
    <source>
        <strain>342</strain>
    </source>
</reference>
<evidence type="ECO:0000255" key="1">
    <source>
        <dbReference type="HAMAP-Rule" id="MF_01306"/>
    </source>
</evidence>
<evidence type="ECO:0000305" key="2"/>
<accession>B5XNB5</accession>
<dbReference type="EMBL" id="CP000964">
    <property type="protein sequence ID" value="ACI06576.1"/>
    <property type="molecule type" value="Genomic_DNA"/>
</dbReference>
<dbReference type="SMR" id="B5XNB5"/>
<dbReference type="KEGG" id="kpe:KPK_0420"/>
<dbReference type="HOGENOM" id="CLU_092403_0_2_6"/>
<dbReference type="Proteomes" id="UP000001734">
    <property type="component" value="Chromosome"/>
</dbReference>
<dbReference type="GO" id="GO:0015935">
    <property type="term" value="C:small ribosomal subunit"/>
    <property type="evidence" value="ECO:0007669"/>
    <property type="project" value="InterPro"/>
</dbReference>
<dbReference type="GO" id="GO:0019843">
    <property type="term" value="F:rRNA binding"/>
    <property type="evidence" value="ECO:0007669"/>
    <property type="project" value="UniProtKB-UniRule"/>
</dbReference>
<dbReference type="GO" id="GO:0003735">
    <property type="term" value="F:structural constituent of ribosome"/>
    <property type="evidence" value="ECO:0007669"/>
    <property type="project" value="InterPro"/>
</dbReference>
<dbReference type="GO" id="GO:0042274">
    <property type="term" value="P:ribosomal small subunit biogenesis"/>
    <property type="evidence" value="ECO:0007669"/>
    <property type="project" value="TreeGrafter"/>
</dbReference>
<dbReference type="GO" id="GO:0006412">
    <property type="term" value="P:translation"/>
    <property type="evidence" value="ECO:0007669"/>
    <property type="project" value="UniProtKB-UniRule"/>
</dbReference>
<dbReference type="CDD" id="cd00165">
    <property type="entry name" value="S4"/>
    <property type="match status" value="1"/>
</dbReference>
<dbReference type="FunFam" id="1.10.1050.10:FF:000001">
    <property type="entry name" value="30S ribosomal protein S4"/>
    <property type="match status" value="1"/>
</dbReference>
<dbReference type="FunFam" id="3.10.290.10:FF:000001">
    <property type="entry name" value="30S ribosomal protein S4"/>
    <property type="match status" value="1"/>
</dbReference>
<dbReference type="Gene3D" id="1.10.1050.10">
    <property type="entry name" value="Ribosomal Protein S4 Delta 41, Chain A, domain 1"/>
    <property type="match status" value="1"/>
</dbReference>
<dbReference type="Gene3D" id="3.10.290.10">
    <property type="entry name" value="RNA-binding S4 domain"/>
    <property type="match status" value="1"/>
</dbReference>
<dbReference type="HAMAP" id="MF_01306_B">
    <property type="entry name" value="Ribosomal_uS4_B"/>
    <property type="match status" value="1"/>
</dbReference>
<dbReference type="InterPro" id="IPR022801">
    <property type="entry name" value="Ribosomal_uS4"/>
</dbReference>
<dbReference type="InterPro" id="IPR005709">
    <property type="entry name" value="Ribosomal_uS4_bac-type"/>
</dbReference>
<dbReference type="InterPro" id="IPR018079">
    <property type="entry name" value="Ribosomal_uS4_CS"/>
</dbReference>
<dbReference type="InterPro" id="IPR001912">
    <property type="entry name" value="Ribosomal_uS4_N"/>
</dbReference>
<dbReference type="InterPro" id="IPR002942">
    <property type="entry name" value="S4_RNA-bd"/>
</dbReference>
<dbReference type="InterPro" id="IPR036986">
    <property type="entry name" value="S4_RNA-bd_sf"/>
</dbReference>
<dbReference type="NCBIfam" id="NF003717">
    <property type="entry name" value="PRK05327.1"/>
    <property type="match status" value="1"/>
</dbReference>
<dbReference type="NCBIfam" id="TIGR01017">
    <property type="entry name" value="rpsD_bact"/>
    <property type="match status" value="1"/>
</dbReference>
<dbReference type="PANTHER" id="PTHR11831">
    <property type="entry name" value="30S 40S RIBOSOMAL PROTEIN"/>
    <property type="match status" value="1"/>
</dbReference>
<dbReference type="PANTHER" id="PTHR11831:SF4">
    <property type="entry name" value="SMALL RIBOSOMAL SUBUNIT PROTEIN US4M"/>
    <property type="match status" value="1"/>
</dbReference>
<dbReference type="Pfam" id="PF00163">
    <property type="entry name" value="Ribosomal_S4"/>
    <property type="match status" value="1"/>
</dbReference>
<dbReference type="Pfam" id="PF01479">
    <property type="entry name" value="S4"/>
    <property type="match status" value="1"/>
</dbReference>
<dbReference type="SMART" id="SM01390">
    <property type="entry name" value="Ribosomal_S4"/>
    <property type="match status" value="1"/>
</dbReference>
<dbReference type="SMART" id="SM00363">
    <property type="entry name" value="S4"/>
    <property type="match status" value="1"/>
</dbReference>
<dbReference type="SUPFAM" id="SSF55174">
    <property type="entry name" value="Alpha-L RNA-binding motif"/>
    <property type="match status" value="1"/>
</dbReference>
<dbReference type="PROSITE" id="PS00632">
    <property type="entry name" value="RIBOSOMAL_S4"/>
    <property type="match status" value="1"/>
</dbReference>
<dbReference type="PROSITE" id="PS50889">
    <property type="entry name" value="S4"/>
    <property type="match status" value="1"/>
</dbReference>
<comment type="function">
    <text evidence="1">One of the primary rRNA binding proteins, it binds directly to 16S rRNA where it nucleates assembly of the body of the 30S subunit.</text>
</comment>
<comment type="function">
    <text evidence="1">With S5 and S12 plays an important role in translational accuracy.</text>
</comment>
<comment type="subunit">
    <text evidence="1">Part of the 30S ribosomal subunit. Contacts protein S5. The interaction surface between S4 and S5 is involved in control of translational fidelity.</text>
</comment>
<comment type="similarity">
    <text evidence="1">Belongs to the universal ribosomal protein uS4 family.</text>
</comment>
<name>RS4_KLEP3</name>
<proteinExistence type="inferred from homology"/>
<feature type="chain" id="PRO_1000140746" description="Small ribosomal subunit protein uS4">
    <location>
        <begin position="1"/>
        <end position="206"/>
    </location>
</feature>
<feature type="domain" description="S4 RNA-binding" evidence="1">
    <location>
        <begin position="96"/>
        <end position="156"/>
    </location>
</feature>
<protein>
    <recommendedName>
        <fullName evidence="1">Small ribosomal subunit protein uS4</fullName>
    </recommendedName>
    <alternativeName>
        <fullName evidence="2">30S ribosomal protein S4</fullName>
    </alternativeName>
</protein>
<gene>
    <name evidence="1" type="primary">rpsD</name>
    <name type="ordered locus">KPK_0420</name>
</gene>